<evidence type="ECO:0000305" key="1"/>
<keyword id="KW-0963">Cytoplasm</keyword>
<keyword id="KW-0648">Protein biosynthesis</keyword>
<feature type="chain" id="PRO_0000143160" description="Eukaryotic peptide chain release factor subunit 1">
    <location>
        <begin position="1"/>
        <end position="435"/>
    </location>
</feature>
<protein>
    <recommendedName>
        <fullName>Eukaryotic peptide chain release factor subunit 1</fullName>
        <shortName>Eukaryotic release factor 1</shortName>
        <shortName>eRF1</shortName>
    </recommendedName>
</protein>
<dbReference type="EMBL" id="AB026195">
    <property type="protein sequence ID" value="BAA85336.1"/>
    <property type="molecule type" value="mRNA"/>
</dbReference>
<dbReference type="EMBL" id="AF298833">
    <property type="protein sequence ID" value="AAK07831.1"/>
    <property type="molecule type" value="Genomic_DNA"/>
</dbReference>
<dbReference type="SMR" id="Q9U8U5"/>
<dbReference type="OMA" id="GPGTEKM"/>
<dbReference type="GO" id="GO:0005737">
    <property type="term" value="C:cytoplasm"/>
    <property type="evidence" value="ECO:0007669"/>
    <property type="project" value="UniProtKB-SubCell"/>
</dbReference>
<dbReference type="GO" id="GO:0003747">
    <property type="term" value="F:translation release factor activity"/>
    <property type="evidence" value="ECO:0007669"/>
    <property type="project" value="InterPro"/>
</dbReference>
<dbReference type="FunFam" id="3.30.1330.30:FF:000032">
    <property type="entry name" value="Eukaryotic peptide chain release factor subunit 1"/>
    <property type="match status" value="1"/>
</dbReference>
<dbReference type="FunFam" id="3.30.420.60:FF:000003">
    <property type="entry name" value="Peptide chain release factor subunit 1"/>
    <property type="match status" value="1"/>
</dbReference>
<dbReference type="FunFam" id="3.30.960.10:FF:000003">
    <property type="entry name" value="Peptide chain release factor subunit 1"/>
    <property type="match status" value="1"/>
</dbReference>
<dbReference type="Gene3D" id="3.30.1330.30">
    <property type="match status" value="1"/>
</dbReference>
<dbReference type="Gene3D" id="3.30.960.10">
    <property type="entry name" value="eRF1 domain 1"/>
    <property type="match status" value="1"/>
</dbReference>
<dbReference type="Gene3D" id="3.30.420.60">
    <property type="entry name" value="eRF1 domain 2"/>
    <property type="match status" value="1"/>
</dbReference>
<dbReference type="InterPro" id="IPR042226">
    <property type="entry name" value="eFR1_2_sf"/>
</dbReference>
<dbReference type="InterPro" id="IPR005140">
    <property type="entry name" value="eRF1_1_Pelota"/>
</dbReference>
<dbReference type="InterPro" id="IPR024049">
    <property type="entry name" value="eRF1_1_sf"/>
</dbReference>
<dbReference type="InterPro" id="IPR005141">
    <property type="entry name" value="eRF1_2"/>
</dbReference>
<dbReference type="InterPro" id="IPR005142">
    <property type="entry name" value="eRF1_3"/>
</dbReference>
<dbReference type="InterPro" id="IPR004403">
    <property type="entry name" value="Peptide_chain-rel_eRF1/aRF1"/>
</dbReference>
<dbReference type="InterPro" id="IPR029064">
    <property type="entry name" value="Ribosomal_eL30-like_sf"/>
</dbReference>
<dbReference type="NCBIfam" id="TIGR03676">
    <property type="entry name" value="aRF1_eRF1"/>
    <property type="match status" value="1"/>
</dbReference>
<dbReference type="PANTHER" id="PTHR10113">
    <property type="entry name" value="PEPTIDE CHAIN RELEASE FACTOR SUBUNIT 1"/>
    <property type="match status" value="1"/>
</dbReference>
<dbReference type="Pfam" id="PF03463">
    <property type="entry name" value="eRF1_1"/>
    <property type="match status" value="1"/>
</dbReference>
<dbReference type="Pfam" id="PF03464">
    <property type="entry name" value="eRF1_2"/>
    <property type="match status" value="1"/>
</dbReference>
<dbReference type="Pfam" id="PF03465">
    <property type="entry name" value="eRF1_3"/>
    <property type="match status" value="1"/>
</dbReference>
<dbReference type="SMART" id="SM01194">
    <property type="entry name" value="eRF1_1"/>
    <property type="match status" value="1"/>
</dbReference>
<dbReference type="SUPFAM" id="SSF55315">
    <property type="entry name" value="L30e-like"/>
    <property type="match status" value="1"/>
</dbReference>
<dbReference type="SUPFAM" id="SSF55481">
    <property type="entry name" value="N-terminal domain of eukaryotic peptide chain release factor subunit 1, ERF1"/>
    <property type="match status" value="1"/>
</dbReference>
<dbReference type="SUPFAM" id="SSF53137">
    <property type="entry name" value="Translational machinery components"/>
    <property type="match status" value="1"/>
</dbReference>
<proteinExistence type="evidence at transcript level"/>
<organism>
    <name type="scientific">Tetrahymena thermophila</name>
    <dbReference type="NCBI Taxonomy" id="5911"/>
    <lineage>
        <taxon>Eukaryota</taxon>
        <taxon>Sar</taxon>
        <taxon>Alveolata</taxon>
        <taxon>Ciliophora</taxon>
        <taxon>Intramacronucleata</taxon>
        <taxon>Oligohymenophorea</taxon>
        <taxon>Hymenostomatida</taxon>
        <taxon>Tetrahymenina</taxon>
        <taxon>Tetrahymenidae</taxon>
        <taxon>Tetrahymena</taxon>
    </lineage>
</organism>
<sequence length="435" mass="49559">MEEKDQRQRNIEHFKIKKLMTRLRNTRGSGTSMVSLIIPPKKQINDSTKLISDEFSKATNIKDRVNRQSVQDAMVSALQRLKLYQRTPNNGLILYCGKVLNEEGKEIKLLIDFEPYKPINTSLYFCDSKFHVDELGSLLETDPPFGFIVMDGQGALYANLQGNTKTVLNKFSVELPKKHGRGGQSSVRFARLRVEKRHNYLRKVCEVATQTFISQDKINVQGLVLAGSGDFKNELSTTQMFDPRLACKIIKIVDVSYGGENGLNQAIELAQESLTNVKFVQEKNVISKFFDCIAIDSGTVVYGVQDTMQLLLDGVIENILCFEELTTLRVTRKNKVTEQITHIFIPPNELNNPKHFKDGEHELEKIEVENLTEWLAEHYSEFGAELYFITDKSAEGCQFVKGFSGIGGFLRYKVDLEHIVNPNDEYNYEEEEGFI</sequence>
<reference key="1">
    <citation type="journal article" date="1999" name="FEBS Lett.">
        <title>Polypeptide release factor eRF1 from Tetrahymena thermophila: cDNA cloning, purification and complex formation with yeast eRF3.</title>
        <authorList>
            <person name="Karamyshev A.L."/>
            <person name="Ito K."/>
            <person name="Nakamura Y."/>
        </authorList>
    </citation>
    <scope>NUCLEOTIDE SEQUENCE [MRNA]</scope>
</reference>
<reference key="2">
    <citation type="journal article" date="2001" name="Nucleic Acids Res.">
        <title>Class I release factors in ciliates with variant genetic codes.</title>
        <authorList>
            <person name="Inagaki Y."/>
            <person name="Doolittle W.F."/>
        </authorList>
    </citation>
    <scope>NUCLEOTIDE SEQUENCE [GENOMIC DNA]</scope>
</reference>
<accession>Q9U8U5</accession>
<gene>
    <name type="primary">ERF1</name>
</gene>
<comment type="function">
    <text>Directs the termination of nascent peptide synthesis (translation) in response to the termination codon UGA. In T.thermophila UAA and UAG codes for glutamine.</text>
</comment>
<comment type="subunit">
    <text>Heterodimer of two subunits, one of which binds GTP.</text>
</comment>
<comment type="subcellular location">
    <subcellularLocation>
        <location>Cytoplasm</location>
    </subcellularLocation>
</comment>
<comment type="similarity">
    <text evidence="1">Belongs to the eukaryotic release factor 1 family.</text>
</comment>
<name>ERF1_TETTH</name>